<dbReference type="EMBL" id="L05770">
    <property type="protein sequence ID" value="AAC37151.1"/>
    <property type="molecule type" value="Genomic_DNA"/>
</dbReference>
<dbReference type="EMBL" id="CR543861">
    <property type="protein sequence ID" value="CAG68551.1"/>
    <property type="molecule type" value="Genomic_DNA"/>
</dbReference>
<dbReference type="SMR" id="Q43975"/>
<dbReference type="STRING" id="202950.GCA_001485005_03087"/>
<dbReference type="KEGG" id="aci:ACIAD1709"/>
<dbReference type="eggNOG" id="COG2271">
    <property type="taxonomic scope" value="Bacteria"/>
</dbReference>
<dbReference type="HOGENOM" id="CLU_001265_46_4_6"/>
<dbReference type="Proteomes" id="UP000000430">
    <property type="component" value="Chromosome"/>
</dbReference>
<dbReference type="GO" id="GO:0005886">
    <property type="term" value="C:plasma membrane"/>
    <property type="evidence" value="ECO:0007669"/>
    <property type="project" value="UniProtKB-SubCell"/>
</dbReference>
<dbReference type="GO" id="GO:0046943">
    <property type="term" value="F:carboxylic acid transmembrane transporter activity"/>
    <property type="evidence" value="ECO:0007669"/>
    <property type="project" value="TreeGrafter"/>
</dbReference>
<dbReference type="CDD" id="cd17365">
    <property type="entry name" value="MFS_PcaK_like"/>
    <property type="match status" value="1"/>
</dbReference>
<dbReference type="Gene3D" id="1.20.1250.20">
    <property type="entry name" value="MFS general substrate transporter like domains"/>
    <property type="match status" value="1"/>
</dbReference>
<dbReference type="InterPro" id="IPR011701">
    <property type="entry name" value="MFS"/>
</dbReference>
<dbReference type="InterPro" id="IPR004746">
    <property type="entry name" value="MFS_AAHS"/>
</dbReference>
<dbReference type="InterPro" id="IPR020846">
    <property type="entry name" value="MFS_dom"/>
</dbReference>
<dbReference type="InterPro" id="IPR036259">
    <property type="entry name" value="MFS_trans_sf"/>
</dbReference>
<dbReference type="InterPro" id="IPR005829">
    <property type="entry name" value="Sugar_transporter_CS"/>
</dbReference>
<dbReference type="NCBIfam" id="TIGR00895">
    <property type="entry name" value="2A0115"/>
    <property type="match status" value="1"/>
</dbReference>
<dbReference type="PANTHER" id="PTHR23508">
    <property type="entry name" value="CARBOXYLIC ACID TRANSPORTER PROTEIN HOMOLOG"/>
    <property type="match status" value="1"/>
</dbReference>
<dbReference type="PANTHER" id="PTHR23508:SF10">
    <property type="entry name" value="CARBOXYLIC ACID TRANSPORTER PROTEIN HOMOLOG"/>
    <property type="match status" value="1"/>
</dbReference>
<dbReference type="Pfam" id="PF07690">
    <property type="entry name" value="MFS_1"/>
    <property type="match status" value="1"/>
</dbReference>
<dbReference type="SUPFAM" id="SSF103473">
    <property type="entry name" value="MFS general substrate transporter"/>
    <property type="match status" value="1"/>
</dbReference>
<dbReference type="PROSITE" id="PS50850">
    <property type="entry name" value="MFS"/>
    <property type="match status" value="1"/>
</dbReference>
<sequence length="457" mass="49192">MPKEANMASQDYATQRSSLDAQALINDAPLSRYQWLIAIVCFLIVFVDGIDTAAMGFIAPALAQDWGVDRSQLGPVMSAALGGMIIGALVSGPTADRFGRKIVLSMSMLVFGGFTLACAYSTNLDSLVIFRFLTGIGLGAAMPNATTLFSEYCPARIRSLLVTCMFCGYNLGMAIGGFISSWLIPAFGWHSLFLLGGWAPLILMLLVIFFLPESYRFLIVKGKNTKKVRQILSRIAPQKVQGVTEFHVPEEKVEAGTKKGVFGMLFSAKYVKGTVLLWVTYFMGLVMIYLLTSWLPTLMRETGASLERAAFLGGLFQFGGVLSALFIGWAMDRFNPNRIIAGFYLAAGIFAVIVGQSLSNPTLLALFILCAGIAVNGAQSSMPVLSARFYPTQCRATGVAWMSGIGRFGAVFGAWIGAVLLGNNWSFTMILSMLIIPAAAAAIAIFVKSLVAHTDAT</sequence>
<name>PCAK_ACIAD</name>
<keyword id="KW-0997">Cell inner membrane</keyword>
<keyword id="KW-1003">Cell membrane</keyword>
<keyword id="KW-0472">Membrane</keyword>
<keyword id="KW-0812">Transmembrane</keyword>
<keyword id="KW-1133">Transmembrane helix</keyword>
<keyword id="KW-0813">Transport</keyword>
<comment type="function">
    <text evidence="2">Uptake of 4-hydroxybenzoate (4-HB). Can also transport a variety of aromatic acids with hydroxyl substitutions at the 2-, 3- and 4-positions, such as salicylate, 2,4-dihydroxybenzoate, protocatechuate, 3-hydroxybenzoate, vanillate and gentisate.</text>
</comment>
<comment type="subunit">
    <text evidence="2">Homotrimer.</text>
</comment>
<comment type="subcellular location">
    <subcellularLocation>
        <location evidence="2">Cell inner membrane</location>
        <topology evidence="1">Multi-pass membrane protein</topology>
    </subcellularLocation>
</comment>
<comment type="similarity">
    <text evidence="5">Belongs to the major facilitator superfamily. Aromatic acid:H(+) symporter (AAHS) (TC 2.A.1.15) family.</text>
</comment>
<evidence type="ECO:0000255" key="1"/>
<evidence type="ECO:0000269" key="2">
    <source>
    </source>
</evidence>
<evidence type="ECO:0000303" key="3">
    <source>
    </source>
</evidence>
<evidence type="ECO:0000303" key="4">
    <source>
    </source>
</evidence>
<evidence type="ECO:0000305" key="5"/>
<evidence type="ECO:0000305" key="6">
    <source>
    </source>
</evidence>
<reference key="1">
    <citation type="journal article" date="1994" name="Gene">
        <title>Contrasting patterns of evolutionary divergence within the Acinetobacter calcoaceticus pca operon.</title>
        <authorList>
            <person name="Kowalchuk G.A."/>
            <person name="Hartnett G.B."/>
            <person name="Benson A."/>
            <person name="Houghton J.E."/>
            <person name="Ngai K.-L."/>
            <person name="Ornston L.N."/>
        </authorList>
    </citation>
    <scope>NUCLEOTIDE SEQUENCE [GENOMIC DNA]</scope>
</reference>
<reference key="2">
    <citation type="journal article" date="2004" name="Nucleic Acids Res.">
        <title>Unique features revealed by the genome sequence of Acinetobacter sp. ADP1, a versatile and naturally transformation competent bacterium.</title>
        <authorList>
            <person name="Barbe V."/>
            <person name="Vallenet D."/>
            <person name="Fonknechten N."/>
            <person name="Kreimeyer A."/>
            <person name="Oztas S."/>
            <person name="Labarre L."/>
            <person name="Cruveiller S."/>
            <person name="Robert C."/>
            <person name="Duprat S."/>
            <person name="Wincker P."/>
            <person name="Ornston L.N."/>
            <person name="Weissenbach J."/>
            <person name="Marliere P."/>
            <person name="Cohen G.N."/>
            <person name="Medigue C."/>
        </authorList>
    </citation>
    <scope>NUCLEOTIDE SEQUENCE [LARGE SCALE GENOMIC DNA]</scope>
    <source>
        <strain>ATCC 33305 / BD413 / ADP1</strain>
    </source>
</reference>
<reference key="3">
    <citation type="journal article" date="2014" name="Protein Expr. Purif.">
        <title>Expression, purification and reconstitution of the 4-hydroxybenzoate transporter PcaK from Acinetobacter sp. ADP1.</title>
        <authorList>
            <person name="Pernstich C."/>
            <person name="Senior L."/>
            <person name="MacInnes K.A."/>
            <person name="Forsaith M."/>
            <person name="Curnow P."/>
        </authorList>
    </citation>
    <scope>FUNCTION</scope>
    <scope>SUBUNIT</scope>
    <scope>SUBCELLULAR LOCATION</scope>
    <source>
        <strain>ATCC 33305 / BD413 / ADP1</strain>
    </source>
</reference>
<proteinExistence type="evidence at protein level"/>
<organism>
    <name type="scientific">Acinetobacter baylyi (strain ATCC 33305 / BD413 / ADP1)</name>
    <dbReference type="NCBI Taxonomy" id="62977"/>
    <lineage>
        <taxon>Bacteria</taxon>
        <taxon>Pseudomonadati</taxon>
        <taxon>Pseudomonadota</taxon>
        <taxon>Gammaproteobacteria</taxon>
        <taxon>Moraxellales</taxon>
        <taxon>Moraxellaceae</taxon>
        <taxon>Acinetobacter</taxon>
    </lineage>
</organism>
<gene>
    <name evidence="4" type="primary">pcaK</name>
    <name type="ordered locus">ACIAD1709</name>
</gene>
<protein>
    <recommendedName>
        <fullName evidence="3">4-hydroxybenzoate transporter PcaK</fullName>
        <shortName evidence="5">4-HB transporter</shortName>
    </recommendedName>
</protein>
<accession>Q43975</accession>
<accession>Q6FBL1</accession>
<feature type="chain" id="PRO_0000050320" description="4-hydroxybenzoate transporter PcaK">
    <location>
        <begin position="1"/>
        <end position="457"/>
    </location>
</feature>
<feature type="topological domain" description="Cytoplasmic" evidence="5">
    <location>
        <begin position="1"/>
        <end position="34"/>
    </location>
</feature>
<feature type="transmembrane region" description="Helical" evidence="1">
    <location>
        <begin position="35"/>
        <end position="55"/>
    </location>
</feature>
<feature type="topological domain" description="Periplasmic" evidence="5">
    <location>
        <begin position="56"/>
        <end position="72"/>
    </location>
</feature>
<feature type="transmembrane region" description="Helical" evidence="1">
    <location>
        <begin position="73"/>
        <end position="93"/>
    </location>
</feature>
<feature type="topological domain" description="Cytoplasmic" evidence="5">
    <location>
        <begin position="94"/>
        <end position="101"/>
    </location>
</feature>
<feature type="transmembrane region" description="Helical" evidence="1">
    <location>
        <begin position="102"/>
        <end position="122"/>
    </location>
</feature>
<feature type="topological domain" description="Periplasmic" evidence="5">
    <location>
        <begin position="123"/>
        <end position="128"/>
    </location>
</feature>
<feature type="transmembrane region" description="Helical" evidence="1">
    <location>
        <begin position="129"/>
        <end position="149"/>
    </location>
</feature>
<feature type="topological domain" description="Cytoplasmic" evidence="5">
    <location>
        <begin position="150"/>
        <end position="168"/>
    </location>
</feature>
<feature type="transmembrane region" description="Helical" evidence="1">
    <location>
        <begin position="169"/>
        <end position="189"/>
    </location>
</feature>
<feature type="topological domain" description="Periplasmic" evidence="5">
    <location>
        <begin position="190"/>
        <end position="191"/>
    </location>
</feature>
<feature type="transmembrane region" description="Helical" evidence="1">
    <location>
        <begin position="192"/>
        <end position="212"/>
    </location>
</feature>
<feature type="topological domain" description="Cytoplasmic" evidence="5">
    <location>
        <begin position="213"/>
        <end position="274"/>
    </location>
</feature>
<feature type="transmembrane region" description="Helical" evidence="1">
    <location>
        <begin position="275"/>
        <end position="295"/>
    </location>
</feature>
<feature type="topological domain" description="Periplasmic" evidence="5">
    <location>
        <begin position="296"/>
        <end position="310"/>
    </location>
</feature>
<feature type="transmembrane region" description="Helical" evidence="1">
    <location>
        <begin position="311"/>
        <end position="331"/>
    </location>
</feature>
<feature type="topological domain" description="Cytoplasmic" evidence="5">
    <location>
        <begin position="332"/>
        <end position="338"/>
    </location>
</feature>
<feature type="transmembrane region" description="Helical" evidence="1">
    <location>
        <begin position="339"/>
        <end position="359"/>
    </location>
</feature>
<feature type="topological domain" description="Periplasmic" evidence="5">
    <location>
        <begin position="360"/>
        <end position="363"/>
    </location>
</feature>
<feature type="transmembrane region" description="Helical" evidence="1">
    <location>
        <begin position="364"/>
        <end position="384"/>
    </location>
</feature>
<feature type="topological domain" description="Cytoplasmic" evidence="5">
    <location>
        <begin position="385"/>
        <end position="400"/>
    </location>
</feature>
<feature type="transmembrane region" description="Helical" evidence="1">
    <location>
        <begin position="401"/>
        <end position="421"/>
    </location>
</feature>
<feature type="topological domain" description="Periplasmic" evidence="5">
    <location>
        <begin position="422"/>
        <end position="426"/>
    </location>
</feature>
<feature type="transmembrane region" description="Helical" evidence="1">
    <location>
        <begin position="427"/>
        <end position="447"/>
    </location>
</feature>
<feature type="topological domain" description="Cytoplasmic" evidence="6">
    <location>
        <begin position="448"/>
        <end position="457"/>
    </location>
</feature>
<feature type="sequence conflict" description="In Ref. 1; AAC37151." evidence="5" ref="1">
    <original>A</original>
    <variation>R</variation>
    <location>
        <position position="439"/>
    </location>
</feature>